<evidence type="ECO:0000255" key="1">
    <source>
        <dbReference type="HAMAP-Rule" id="MF_01350"/>
    </source>
</evidence>
<evidence type="ECO:0000305" key="2"/>
<accession>Q37165</accession>
<dbReference type="EC" id="7.1.1.-" evidence="1"/>
<dbReference type="EMBL" id="X98298">
    <property type="protein sequence ID" value="CAA66944.1"/>
    <property type="molecule type" value="Genomic_DNA"/>
</dbReference>
<dbReference type="EMBL" id="AP000423">
    <property type="protein sequence ID" value="BAA84442.1"/>
    <property type="molecule type" value="Genomic_DNA"/>
</dbReference>
<dbReference type="RefSeq" id="NP_051114.1">
    <property type="nucleotide sequence ID" value="NC_000932.1"/>
</dbReference>
<dbReference type="PDB" id="7WFF">
    <property type="method" value="EM"/>
    <property type="resolution" value="3.59 A"/>
    <property type="chains" value="A=1-360"/>
</dbReference>
<dbReference type="PDB" id="7WG5">
    <property type="method" value="EM"/>
    <property type="resolution" value="3.89 A"/>
    <property type="chains" value="A=1-360"/>
</dbReference>
<dbReference type="PDBsum" id="7WFF"/>
<dbReference type="PDBsum" id="7WG5"/>
<dbReference type="EMDB" id="EMD-32464"/>
<dbReference type="EMDB" id="EMD-32477"/>
<dbReference type="SMR" id="Q37165"/>
<dbReference type="FunCoup" id="Q37165">
    <property type="interactions" value="31"/>
</dbReference>
<dbReference type="STRING" id="3702.Q37165"/>
<dbReference type="TCDB" id="3.D.1.8.1">
    <property type="family name" value="the h+ or na+-translocating nadh dehydrogenase (ndh) family"/>
</dbReference>
<dbReference type="PaxDb" id="3702-ATCG01100.1"/>
<dbReference type="ProteomicsDB" id="248990"/>
<dbReference type="EnsemblPlants" id="ATCG01100.1">
    <property type="protein sequence ID" value="ATCG01100.1"/>
    <property type="gene ID" value="ATCG01100"/>
</dbReference>
<dbReference type="GeneID" id="844804"/>
<dbReference type="Gramene" id="ATCG01100.1">
    <property type="protein sequence ID" value="ATCG01100.1"/>
    <property type="gene ID" value="ATCG01100"/>
</dbReference>
<dbReference type="KEGG" id="ath:ArthCp079"/>
<dbReference type="Araport" id="ATCG01100"/>
<dbReference type="TAIR" id="ATCG01100">
    <property type="gene designation" value="NDHA"/>
</dbReference>
<dbReference type="eggNOG" id="KOG4770">
    <property type="taxonomic scope" value="Eukaryota"/>
</dbReference>
<dbReference type="HOGENOM" id="CLU_015134_0_1_1"/>
<dbReference type="InParanoid" id="Q37165"/>
<dbReference type="OMA" id="WSGWASN"/>
<dbReference type="BioCyc" id="ARA:ATCG01100-MONOMER"/>
<dbReference type="PRO" id="PR:Q37165"/>
<dbReference type="Proteomes" id="UP000006548">
    <property type="component" value="Chloroplast Pltd"/>
</dbReference>
<dbReference type="ExpressionAtlas" id="Q37165">
    <property type="expression patterns" value="baseline and differential"/>
</dbReference>
<dbReference type="GO" id="GO:0009507">
    <property type="term" value="C:chloroplast"/>
    <property type="evidence" value="ECO:0007005"/>
    <property type="project" value="TAIR"/>
</dbReference>
<dbReference type="GO" id="GO:0009535">
    <property type="term" value="C:chloroplast thylakoid membrane"/>
    <property type="evidence" value="ECO:0007669"/>
    <property type="project" value="UniProtKB-SubCell"/>
</dbReference>
<dbReference type="GO" id="GO:0016651">
    <property type="term" value="F:oxidoreductase activity, acting on NAD(P)H"/>
    <property type="evidence" value="ECO:0000303"/>
    <property type="project" value="TAIR"/>
</dbReference>
<dbReference type="GO" id="GO:0016655">
    <property type="term" value="F:oxidoreductase activity, acting on NAD(P)H, quinone or similar compound as acceptor"/>
    <property type="evidence" value="ECO:0007669"/>
    <property type="project" value="UniProtKB-UniRule"/>
</dbReference>
<dbReference type="GO" id="GO:0048038">
    <property type="term" value="F:quinone binding"/>
    <property type="evidence" value="ECO:0007669"/>
    <property type="project" value="UniProtKB-KW"/>
</dbReference>
<dbReference type="GO" id="GO:0015979">
    <property type="term" value="P:photosynthesis"/>
    <property type="evidence" value="ECO:0000304"/>
    <property type="project" value="TAIR"/>
</dbReference>
<dbReference type="GO" id="GO:0019684">
    <property type="term" value="P:photosynthesis, light reaction"/>
    <property type="evidence" value="ECO:0007669"/>
    <property type="project" value="UniProtKB-UniRule"/>
</dbReference>
<dbReference type="HAMAP" id="MF_01350">
    <property type="entry name" value="NDH1_NuoH"/>
    <property type="match status" value="1"/>
</dbReference>
<dbReference type="InterPro" id="IPR001694">
    <property type="entry name" value="NADH_UbQ_OxRdtase_su1/FPO"/>
</dbReference>
<dbReference type="InterPro" id="IPR018086">
    <property type="entry name" value="NADH_UbQ_OxRdtase_su1_CS"/>
</dbReference>
<dbReference type="NCBIfam" id="NF004741">
    <property type="entry name" value="PRK06076.1-2"/>
    <property type="match status" value="1"/>
</dbReference>
<dbReference type="PANTHER" id="PTHR11432">
    <property type="entry name" value="NADH DEHYDROGENASE SUBUNIT 1"/>
    <property type="match status" value="1"/>
</dbReference>
<dbReference type="PANTHER" id="PTHR11432:SF3">
    <property type="entry name" value="NADH-UBIQUINONE OXIDOREDUCTASE CHAIN 1"/>
    <property type="match status" value="1"/>
</dbReference>
<dbReference type="Pfam" id="PF00146">
    <property type="entry name" value="NADHdh"/>
    <property type="match status" value="1"/>
</dbReference>
<dbReference type="PROSITE" id="PS00667">
    <property type="entry name" value="COMPLEX1_ND1_1"/>
    <property type="match status" value="1"/>
</dbReference>
<dbReference type="PROSITE" id="PS00668">
    <property type="entry name" value="COMPLEX1_ND1_2"/>
    <property type="match status" value="1"/>
</dbReference>
<geneLocation type="chloroplast"/>
<organism>
    <name type="scientific">Arabidopsis thaliana</name>
    <name type="common">Mouse-ear cress</name>
    <dbReference type="NCBI Taxonomy" id="3702"/>
    <lineage>
        <taxon>Eukaryota</taxon>
        <taxon>Viridiplantae</taxon>
        <taxon>Streptophyta</taxon>
        <taxon>Embryophyta</taxon>
        <taxon>Tracheophyta</taxon>
        <taxon>Spermatophyta</taxon>
        <taxon>Magnoliopsida</taxon>
        <taxon>eudicotyledons</taxon>
        <taxon>Gunneridae</taxon>
        <taxon>Pentapetalae</taxon>
        <taxon>rosids</taxon>
        <taxon>malvids</taxon>
        <taxon>Brassicales</taxon>
        <taxon>Brassicaceae</taxon>
        <taxon>Camelineae</taxon>
        <taxon>Arabidopsis</taxon>
    </lineage>
</organism>
<feature type="chain" id="PRO_0000117506" description="NAD(P)H-quinone oxidoreductase subunit 1, chloroplastic">
    <location>
        <begin position="1"/>
        <end position="360"/>
    </location>
</feature>
<feature type="transmembrane region" description="Helical" evidence="1">
    <location>
        <begin position="27"/>
        <end position="47"/>
    </location>
</feature>
<feature type="transmembrane region" description="Helical" evidence="1">
    <location>
        <begin position="98"/>
        <end position="118"/>
    </location>
</feature>
<feature type="transmembrane region" description="Helical" evidence="1">
    <location>
        <begin position="129"/>
        <end position="149"/>
    </location>
</feature>
<feature type="transmembrane region" description="Helical" evidence="1">
    <location>
        <begin position="165"/>
        <end position="185"/>
    </location>
</feature>
<feature type="transmembrane region" description="Helical" evidence="1">
    <location>
        <begin position="203"/>
        <end position="223"/>
    </location>
</feature>
<feature type="transmembrane region" description="Helical" evidence="1">
    <location>
        <begin position="253"/>
        <end position="273"/>
    </location>
</feature>
<feature type="transmembrane region" description="Helical" evidence="1">
    <location>
        <begin position="297"/>
        <end position="317"/>
    </location>
</feature>
<feature type="transmembrane region" description="Helical" evidence="1">
    <location>
        <begin position="340"/>
        <end position="360"/>
    </location>
</feature>
<feature type="sequence conflict" description="In Ref. 1; CAA66944." evidence="2" ref="1">
    <original>F</original>
    <variation>I</variation>
    <location>
        <position position="14"/>
    </location>
</feature>
<feature type="sequence conflict" description="In Ref. 1; CAA66944." evidence="2" ref="1">
    <original>C</original>
    <variation>S</variation>
    <location>
        <position position="226"/>
    </location>
</feature>
<feature type="sequence conflict" description="In Ref. 1; CAA66944." evidence="2" ref="1">
    <original>I</original>
    <variation>S</variation>
    <location>
        <position position="283"/>
    </location>
</feature>
<feature type="sequence conflict" description="In Ref. 1; CAA66944." evidence="2" ref="1">
    <original>G</original>
    <variation>A</variation>
    <location>
        <position position="299"/>
    </location>
</feature>
<reference key="1">
    <citation type="submission" date="1996-07" db="EMBL/GenBank/DDBJ databases">
        <authorList>
            <person name="Schuster W."/>
        </authorList>
    </citation>
    <scope>NUCLEOTIDE SEQUENCE [GENOMIC DNA]</scope>
    <source>
        <strain>cv. C24</strain>
    </source>
</reference>
<reference key="2">
    <citation type="journal article" date="1999" name="DNA Res.">
        <title>Complete structure of the chloroplast genome of Arabidopsis thaliana.</title>
        <authorList>
            <person name="Sato S."/>
            <person name="Nakamura Y."/>
            <person name="Kaneko T."/>
            <person name="Asamizu E."/>
            <person name="Tabata S."/>
        </authorList>
    </citation>
    <scope>NUCLEOTIDE SEQUENCE [LARGE SCALE GENOMIC DNA]</scope>
    <source>
        <strain>cv. Columbia</strain>
    </source>
</reference>
<name>NU1C_ARATH</name>
<comment type="function">
    <text evidence="1">NDH shuttles electrons from NAD(P)H:plastoquinone, via FMN and iron-sulfur (Fe-S) centers, to quinones in the photosynthetic chain and possibly in a chloroplast respiratory chain. The immediate electron acceptor for the enzyme in this species is believed to be plastoquinone. Couples the redox reaction to proton translocation, and thus conserves the redox energy in a proton gradient.</text>
</comment>
<comment type="catalytic activity">
    <reaction evidence="1">
        <text>a plastoquinone + NADH + (n+1) H(+)(in) = a plastoquinol + NAD(+) + n H(+)(out)</text>
        <dbReference type="Rhea" id="RHEA:42608"/>
        <dbReference type="Rhea" id="RHEA-COMP:9561"/>
        <dbReference type="Rhea" id="RHEA-COMP:9562"/>
        <dbReference type="ChEBI" id="CHEBI:15378"/>
        <dbReference type="ChEBI" id="CHEBI:17757"/>
        <dbReference type="ChEBI" id="CHEBI:57540"/>
        <dbReference type="ChEBI" id="CHEBI:57945"/>
        <dbReference type="ChEBI" id="CHEBI:62192"/>
    </reaction>
</comment>
<comment type="catalytic activity">
    <reaction evidence="1">
        <text>a plastoquinone + NADPH + (n+1) H(+)(in) = a plastoquinol + NADP(+) + n H(+)(out)</text>
        <dbReference type="Rhea" id="RHEA:42612"/>
        <dbReference type="Rhea" id="RHEA-COMP:9561"/>
        <dbReference type="Rhea" id="RHEA-COMP:9562"/>
        <dbReference type="ChEBI" id="CHEBI:15378"/>
        <dbReference type="ChEBI" id="CHEBI:17757"/>
        <dbReference type="ChEBI" id="CHEBI:57783"/>
        <dbReference type="ChEBI" id="CHEBI:58349"/>
        <dbReference type="ChEBI" id="CHEBI:62192"/>
    </reaction>
</comment>
<comment type="subunit">
    <text evidence="1">NDH is composed of at least 16 different subunits, 5 of which are encoded in the nucleus.</text>
</comment>
<comment type="subcellular location">
    <subcellularLocation>
        <location evidence="1">Plastid</location>
        <location evidence="1">Chloroplast thylakoid membrane</location>
        <topology evidence="1">Multi-pass membrane protein</topology>
    </subcellularLocation>
</comment>
<comment type="similarity">
    <text evidence="1">Belongs to the complex I subunit 1 family.</text>
</comment>
<proteinExistence type="evidence at protein level"/>
<sequence>MIIYATAVQTINSFVKLESLKEVYGLIWIFVPIFSLVLGIITGVLVIVWLEREISAGIQQRIGPEYAGPLGILQALADGTKLLFKENLRPSRGNTPLFSIGPSIAVISILLSYSVIPFSNHLVLADLNIGIFLWIAISSIAPIGLLMSGYGSNNKYSFLGGLRAAAQSISYEIPLTLCVLSISLLSNSLSTVDIVEAQSKYGFWGWNLWRQPIGFIIFLISSLAECERLPFDLPEAEEELIAGYQTEYSGIKFGLFYVASYLNLLISSLFVTVLYLGGWNISIPYISILELFQRDQIFGTTIGIFITLAKTYLFLFVSIATRWTLPRLRMDQLLNLGWKFLLPISLGNLLLTTSFQLFSL</sequence>
<gene>
    <name evidence="1" type="primary">ndhA</name>
    <name type="ordered locus">AtCg01100</name>
</gene>
<keyword id="KW-0002">3D-structure</keyword>
<keyword id="KW-0150">Chloroplast</keyword>
<keyword id="KW-0472">Membrane</keyword>
<keyword id="KW-0520">NAD</keyword>
<keyword id="KW-0521">NADP</keyword>
<keyword id="KW-0934">Plastid</keyword>
<keyword id="KW-0618">Plastoquinone</keyword>
<keyword id="KW-0874">Quinone</keyword>
<keyword id="KW-1185">Reference proteome</keyword>
<keyword id="KW-0793">Thylakoid</keyword>
<keyword id="KW-1278">Translocase</keyword>
<keyword id="KW-0812">Transmembrane</keyword>
<keyword id="KW-1133">Transmembrane helix</keyword>
<protein>
    <recommendedName>
        <fullName evidence="1">NAD(P)H-quinone oxidoreductase subunit 1, chloroplastic</fullName>
        <ecNumber evidence="1">7.1.1.-</ecNumber>
    </recommendedName>
    <alternativeName>
        <fullName evidence="1">NAD(P)H dehydrogenase subunit 1</fullName>
        <shortName evidence="1">NDH subunit 1</shortName>
    </alternativeName>
    <alternativeName>
        <fullName evidence="1">NADH-plastoquinone oxidoreductase subunit 1</fullName>
    </alternativeName>
</protein>